<feature type="chain" id="PRO_0000226888" description="Putative transport protein YbjL">
    <location>
        <begin position="1"/>
        <end position="561"/>
    </location>
</feature>
<feature type="transmembrane region" description="Helical" evidence="1">
    <location>
        <begin position="8"/>
        <end position="28"/>
    </location>
</feature>
<feature type="transmembrane region" description="Helical" evidence="1">
    <location>
        <begin position="32"/>
        <end position="52"/>
    </location>
</feature>
<feature type="transmembrane region" description="Helical" evidence="1">
    <location>
        <begin position="66"/>
        <end position="86"/>
    </location>
</feature>
<feature type="transmembrane region" description="Helical" evidence="1">
    <location>
        <begin position="94"/>
        <end position="114"/>
    </location>
</feature>
<feature type="transmembrane region" description="Helical" evidence="1">
    <location>
        <begin position="158"/>
        <end position="178"/>
    </location>
</feature>
<feature type="transmembrane region" description="Helical" evidence="1">
    <location>
        <begin position="383"/>
        <end position="403"/>
    </location>
</feature>
<feature type="transmembrane region" description="Helical" evidence="1">
    <location>
        <begin position="406"/>
        <end position="426"/>
    </location>
</feature>
<feature type="transmembrane region" description="Helical" evidence="1">
    <location>
        <begin position="451"/>
        <end position="471"/>
    </location>
</feature>
<feature type="transmembrane region" description="Helical" evidence="1">
    <location>
        <begin position="475"/>
        <end position="495"/>
    </location>
</feature>
<feature type="transmembrane region" description="Helical" evidence="1">
    <location>
        <begin position="503"/>
        <end position="523"/>
    </location>
</feature>
<feature type="transmembrane region" description="Helical" evidence="1">
    <location>
        <begin position="540"/>
        <end position="560"/>
    </location>
</feature>
<feature type="domain" description="RCK C-terminal 1" evidence="1">
    <location>
        <begin position="200"/>
        <end position="288"/>
    </location>
</feature>
<feature type="domain" description="RCK C-terminal 2" evidence="1">
    <location>
        <begin position="292"/>
        <end position="373"/>
    </location>
</feature>
<accession>Q32IC5</accession>
<sequence length="561" mass="60215">MNINVAELLNGNYILLLFVVLALGLCLGKLRLGSIQLGNSIGVLVVSLLLGQQHFSINTDALNLGFMLFIFCVGVEAGPNFFSIFFRDGKNYLMLALVMVGSALVIALGLGKLFGWDIGLTAGMLAGSMTSTPVLVGAGDTLRHSGMESRQLSLALDNLSLGYALTYLIGLVSLIVGARYLPKLQHQDLQTSAQQIARERGLDTDANRKVYLPVIRAYRVGPELVAWTDGKNLRELGIYRQTGCYIERIRRNGILANPDGDAVLQMGDEIALVGYPDAHARLDPSFRNGKEVFDRDLLDMRIVTEEVVVKNHNAVGKCLAQLKLTDHGCFLNRVIRSQIEMPIDDNVVLNKGDVLQVSGDARRVKTIADRIGFISIHSQVTDLLAFCAFFVIGLMIGMITFQFSTFSFGMGNAAGLLFAGIMLGFMRANHPTFGYIPQGALSMVKEFGLMVFMAGVGLSAGSGINNGLGAIGGQMLIAGLIVSLVPVVICFLFGAYVLRMNRALLFGAMMGARTCAPAMEIISDTARSNIPALGYAGTYAIANVLLTLAGTIIVMVCPGLG</sequence>
<protein>
    <recommendedName>
        <fullName evidence="1">Putative transport protein YbjL</fullName>
    </recommendedName>
</protein>
<keyword id="KW-1003">Cell membrane</keyword>
<keyword id="KW-0472">Membrane</keyword>
<keyword id="KW-1185">Reference proteome</keyword>
<keyword id="KW-0677">Repeat</keyword>
<keyword id="KW-0812">Transmembrane</keyword>
<keyword id="KW-1133">Transmembrane helix</keyword>
<keyword id="KW-0813">Transport</keyword>
<comment type="subcellular location">
    <subcellularLocation>
        <location evidence="1">Cell membrane</location>
        <topology evidence="1">Multi-pass membrane protein</topology>
    </subcellularLocation>
</comment>
<comment type="similarity">
    <text evidence="1">Belongs to the AAE transporter (TC 2.A.81) family. YbjL subfamily.</text>
</comment>
<proteinExistence type="inferred from homology"/>
<dbReference type="EMBL" id="CP000034">
    <property type="protein sequence ID" value="ABB60932.1"/>
    <property type="molecule type" value="Genomic_DNA"/>
</dbReference>
<dbReference type="RefSeq" id="WP_001024869.1">
    <property type="nucleotide sequence ID" value="NC_007606.1"/>
</dbReference>
<dbReference type="RefSeq" id="YP_402421.1">
    <property type="nucleotide sequence ID" value="NC_007606.1"/>
</dbReference>
<dbReference type="SMR" id="Q32IC5"/>
<dbReference type="STRING" id="300267.SDY_0748"/>
<dbReference type="EnsemblBacteria" id="ABB60932">
    <property type="protein sequence ID" value="ABB60932"/>
    <property type="gene ID" value="SDY_0748"/>
</dbReference>
<dbReference type="KEGG" id="sdy:SDY_0748"/>
<dbReference type="PATRIC" id="fig|300267.13.peg.862"/>
<dbReference type="HOGENOM" id="CLU_035023_2_2_6"/>
<dbReference type="Proteomes" id="UP000002716">
    <property type="component" value="Chromosome"/>
</dbReference>
<dbReference type="GO" id="GO:0005886">
    <property type="term" value="C:plasma membrane"/>
    <property type="evidence" value="ECO:0007669"/>
    <property type="project" value="UniProtKB-SubCell"/>
</dbReference>
<dbReference type="GO" id="GO:0008324">
    <property type="term" value="F:monoatomic cation transmembrane transporter activity"/>
    <property type="evidence" value="ECO:0007669"/>
    <property type="project" value="InterPro"/>
</dbReference>
<dbReference type="GO" id="GO:0006813">
    <property type="term" value="P:potassium ion transport"/>
    <property type="evidence" value="ECO:0007669"/>
    <property type="project" value="InterPro"/>
</dbReference>
<dbReference type="FunFam" id="3.30.70.1450:FF:000003">
    <property type="entry name" value="Putative transport protein YbjL"/>
    <property type="match status" value="1"/>
</dbReference>
<dbReference type="Gene3D" id="3.30.70.1450">
    <property type="entry name" value="Regulator of K+ conductance, C-terminal domain"/>
    <property type="match status" value="1"/>
</dbReference>
<dbReference type="HAMAP" id="MF_01015">
    <property type="entry name" value="YbjL"/>
    <property type="match status" value="1"/>
</dbReference>
<dbReference type="InterPro" id="IPR050144">
    <property type="entry name" value="AAE_transporter"/>
</dbReference>
<dbReference type="InterPro" id="IPR006037">
    <property type="entry name" value="RCK_C"/>
</dbReference>
<dbReference type="InterPro" id="IPR036721">
    <property type="entry name" value="RCK_C_sf"/>
</dbReference>
<dbReference type="InterPro" id="IPR023017">
    <property type="entry name" value="Transp_YbjL_put"/>
</dbReference>
<dbReference type="InterPro" id="IPR006512">
    <property type="entry name" value="YidE_YbjL"/>
</dbReference>
<dbReference type="NCBIfam" id="NF003440">
    <property type="entry name" value="PRK04972.1"/>
    <property type="match status" value="1"/>
</dbReference>
<dbReference type="NCBIfam" id="TIGR01625">
    <property type="entry name" value="YidE_YbjL_dupl"/>
    <property type="match status" value="2"/>
</dbReference>
<dbReference type="PANTHER" id="PTHR30445">
    <property type="entry name" value="K(+)_H(+) ANTIPORTER SUBUNIT KHTT"/>
    <property type="match status" value="1"/>
</dbReference>
<dbReference type="PANTHER" id="PTHR30445:SF10">
    <property type="entry name" value="TRANSPORT PROTEIN YBJL-RELATED"/>
    <property type="match status" value="1"/>
</dbReference>
<dbReference type="Pfam" id="PF06826">
    <property type="entry name" value="Asp-Al_Ex"/>
    <property type="match status" value="2"/>
</dbReference>
<dbReference type="Pfam" id="PF02080">
    <property type="entry name" value="TrkA_C"/>
    <property type="match status" value="2"/>
</dbReference>
<dbReference type="SUPFAM" id="SSF116726">
    <property type="entry name" value="TrkA C-terminal domain-like"/>
    <property type="match status" value="2"/>
</dbReference>
<dbReference type="PROSITE" id="PS51202">
    <property type="entry name" value="RCK_C"/>
    <property type="match status" value="2"/>
</dbReference>
<name>YBJL_SHIDS</name>
<reference key="1">
    <citation type="journal article" date="2005" name="Nucleic Acids Res.">
        <title>Genome dynamics and diversity of Shigella species, the etiologic agents of bacillary dysentery.</title>
        <authorList>
            <person name="Yang F."/>
            <person name="Yang J."/>
            <person name="Zhang X."/>
            <person name="Chen L."/>
            <person name="Jiang Y."/>
            <person name="Yan Y."/>
            <person name="Tang X."/>
            <person name="Wang J."/>
            <person name="Xiong Z."/>
            <person name="Dong J."/>
            <person name="Xue Y."/>
            <person name="Zhu Y."/>
            <person name="Xu X."/>
            <person name="Sun L."/>
            <person name="Chen S."/>
            <person name="Nie H."/>
            <person name="Peng J."/>
            <person name="Xu J."/>
            <person name="Wang Y."/>
            <person name="Yuan Z."/>
            <person name="Wen Y."/>
            <person name="Yao Z."/>
            <person name="Shen Y."/>
            <person name="Qiang B."/>
            <person name="Hou Y."/>
            <person name="Yu J."/>
            <person name="Jin Q."/>
        </authorList>
    </citation>
    <scope>NUCLEOTIDE SEQUENCE [LARGE SCALE GENOMIC DNA]</scope>
    <source>
        <strain>Sd197</strain>
    </source>
</reference>
<organism>
    <name type="scientific">Shigella dysenteriae serotype 1 (strain Sd197)</name>
    <dbReference type="NCBI Taxonomy" id="300267"/>
    <lineage>
        <taxon>Bacteria</taxon>
        <taxon>Pseudomonadati</taxon>
        <taxon>Pseudomonadota</taxon>
        <taxon>Gammaproteobacteria</taxon>
        <taxon>Enterobacterales</taxon>
        <taxon>Enterobacteriaceae</taxon>
        <taxon>Shigella</taxon>
    </lineage>
</organism>
<evidence type="ECO:0000255" key="1">
    <source>
        <dbReference type="HAMAP-Rule" id="MF_01015"/>
    </source>
</evidence>
<gene>
    <name evidence="1" type="primary">ybjL</name>
    <name type="ordered locus">SDY_0748</name>
</gene>